<evidence type="ECO:0000250" key="1"/>
<evidence type="ECO:0000255" key="2"/>
<evidence type="ECO:0000305" key="3"/>
<proteinExistence type="evidence at transcript level"/>
<name>TXC01_LYCSI</name>
<accession>B6DD13</accession>
<sequence>MKFAVILLFSLVVLAVASESVEEVRREIDIEDLPEQQRGCADLRQPCTEGDDCSCCGSEGVCNCSHPHKKGCYCKTAGPLEKLAKKFKGCKNK</sequence>
<comment type="subcellular location">
    <subcellularLocation>
        <location evidence="1">Secreted</location>
    </subcellularLocation>
</comment>
<comment type="tissue specificity">
    <text>Expressed by the venom gland.</text>
</comment>
<comment type="PTM">
    <text evidence="3">Contains 5 disulfide bonds.</text>
</comment>
<comment type="similarity">
    <text evidence="3">Belongs to the neurotoxin 31 family.</text>
</comment>
<keyword id="KW-1015">Disulfide bond</keyword>
<keyword id="KW-0964">Secreted</keyword>
<keyword id="KW-0732">Signal</keyword>
<keyword id="KW-0800">Toxin</keyword>
<feature type="signal peptide" evidence="2">
    <location>
        <begin position="1"/>
        <end position="18"/>
    </location>
</feature>
<feature type="propeptide" id="PRO_0000401845" evidence="1">
    <location>
        <begin position="19"/>
        <end position="38"/>
    </location>
</feature>
<feature type="chain" id="PRO_0000401846" description="U12-lycotoxin-Ls1a">
    <location>
        <begin position="39"/>
        <end position="93"/>
    </location>
</feature>
<dbReference type="EMBL" id="EU926097">
    <property type="protein sequence ID" value="ACI41429.1"/>
    <property type="molecule type" value="mRNA"/>
</dbReference>
<dbReference type="EMBL" id="FM864101">
    <property type="protein sequence ID" value="CAS03698.1"/>
    <property type="molecule type" value="mRNA"/>
</dbReference>
<dbReference type="SMR" id="B6DD13"/>
<dbReference type="ArachnoServer" id="AS001036">
    <property type="toxin name" value="U12-lycotoxin-Ls1a"/>
</dbReference>
<dbReference type="GO" id="GO:0005576">
    <property type="term" value="C:extracellular region"/>
    <property type="evidence" value="ECO:0007669"/>
    <property type="project" value="UniProtKB-SubCell"/>
</dbReference>
<dbReference type="GO" id="GO:0090729">
    <property type="term" value="F:toxin activity"/>
    <property type="evidence" value="ECO:0007669"/>
    <property type="project" value="UniProtKB-KW"/>
</dbReference>
<reference key="1">
    <citation type="journal article" date="2010" name="Zoology">
        <title>Transcriptome analysis of the venom glands of the Chinese wolf spider Lycosa singoriensis.</title>
        <authorList>
            <person name="Zhang Y."/>
            <person name="Chen J."/>
            <person name="Tang X."/>
            <person name="Wang F."/>
            <person name="Jiang L."/>
            <person name="Xiong X."/>
            <person name="Wang M."/>
            <person name="Rong M."/>
            <person name="Liu Z."/>
            <person name="Liang S."/>
        </authorList>
    </citation>
    <scope>NUCLEOTIDE SEQUENCE [LARGE SCALE MRNA]</scope>
    <source>
        <tissue>Venom gland</tissue>
    </source>
</reference>
<organism>
    <name type="scientific">Lycosa singoriensis</name>
    <name type="common">Wolf spider</name>
    <name type="synonym">Aranea singoriensis</name>
    <dbReference type="NCBI Taxonomy" id="434756"/>
    <lineage>
        <taxon>Eukaryota</taxon>
        <taxon>Metazoa</taxon>
        <taxon>Ecdysozoa</taxon>
        <taxon>Arthropoda</taxon>
        <taxon>Chelicerata</taxon>
        <taxon>Arachnida</taxon>
        <taxon>Araneae</taxon>
        <taxon>Araneomorphae</taxon>
        <taxon>Entelegynae</taxon>
        <taxon>Lycosoidea</taxon>
        <taxon>Lycosidae</taxon>
        <taxon>Lycosa</taxon>
    </lineage>
</organism>
<protein>
    <recommendedName>
        <fullName>U12-lycotoxin-Ls1a</fullName>
    </recommendedName>
    <alternativeName>
        <fullName>Toxin-like structure LSTX-K1</fullName>
    </alternativeName>
</protein>